<name>SCO1_BACSU</name>
<feature type="signal peptide" evidence="6">
    <location>
        <begin position="1"/>
        <end position="18"/>
    </location>
</feature>
<feature type="chain" id="PRO_0000173875" description="SCO1 protein homolog">
    <location>
        <begin position="19"/>
        <end position="193"/>
    </location>
</feature>
<feature type="domain" description="Thioredoxin" evidence="2">
    <location>
        <begin position="26"/>
        <end position="191"/>
    </location>
</feature>
<feature type="binding site" evidence="1">
    <location>
        <position position="64"/>
    </location>
    <ligand>
        <name>Cu cation</name>
        <dbReference type="ChEBI" id="CHEBI:23378"/>
    </ligand>
</feature>
<feature type="binding site" evidence="1">
    <location>
        <position position="68"/>
    </location>
    <ligand>
        <name>Cu cation</name>
        <dbReference type="ChEBI" id="CHEBI:23378"/>
    </ligand>
</feature>
<feature type="binding site" evidence="1">
    <location>
        <position position="154"/>
    </location>
    <ligand>
        <name>Cu cation</name>
        <dbReference type="ChEBI" id="CHEBI:23378"/>
    </ligand>
</feature>
<feature type="lipid moiety-binding region" description="N-palmitoyl cysteine" evidence="6">
    <location>
        <position position="19"/>
    </location>
</feature>
<feature type="lipid moiety-binding region" description="S-diacylglycerol cysteine" evidence="6">
    <location>
        <position position="19"/>
    </location>
</feature>
<feature type="mutagenesis site" description="Abolishes cytochrome c oxidase assembly." evidence="3">
    <original>C</original>
    <variation>S</variation>
    <location>
        <position position="64"/>
    </location>
</feature>
<feature type="mutagenesis site" description="Abolishes cytochrome c oxidase assembly." evidence="3">
    <original>C</original>
    <variation>S</variation>
    <location>
        <position position="68"/>
    </location>
</feature>
<feature type="mutagenesis site" description="Abolishes cytochrome c oxidase assembly." evidence="3">
    <original>H</original>
    <variation>A</variation>
    <location>
        <position position="154"/>
    </location>
</feature>
<feature type="sequence conflict" description="In Ref. 1; AAA96641." evidence="6" ref="1">
    <original>E</original>
    <variation>G</variation>
    <location>
        <position position="85"/>
    </location>
</feature>
<feature type="strand" evidence="8">
    <location>
        <begin position="36"/>
        <end position="38"/>
    </location>
</feature>
<feature type="strand" evidence="8">
    <location>
        <begin position="44"/>
        <end position="46"/>
    </location>
</feature>
<feature type="helix" evidence="8">
    <location>
        <begin position="48"/>
        <end position="50"/>
    </location>
</feature>
<feature type="strand" evidence="8">
    <location>
        <begin position="55"/>
        <end position="60"/>
    </location>
</feature>
<feature type="helix" evidence="8">
    <location>
        <begin position="71"/>
        <end position="84"/>
    </location>
</feature>
<feature type="strand" evidence="8">
    <location>
        <begin position="90"/>
        <end position="96"/>
    </location>
</feature>
<feature type="turn" evidence="8">
    <location>
        <begin position="98"/>
        <end position="100"/>
    </location>
</feature>
<feature type="helix" evidence="8">
    <location>
        <begin position="103"/>
        <end position="110"/>
    </location>
</feature>
<feature type="turn" evidence="7">
    <location>
        <begin position="111"/>
        <end position="114"/>
    </location>
</feature>
<feature type="helix" evidence="8">
    <location>
        <begin position="117"/>
        <end position="119"/>
    </location>
</feature>
<feature type="strand" evidence="8">
    <location>
        <begin position="120"/>
        <end position="124"/>
    </location>
</feature>
<feature type="helix" evidence="8">
    <location>
        <begin position="128"/>
        <end position="139"/>
    </location>
</feature>
<feature type="strand" evidence="7">
    <location>
        <begin position="144"/>
        <end position="146"/>
    </location>
</feature>
<feature type="turn" evidence="7">
    <location>
        <begin position="149"/>
        <end position="152"/>
    </location>
</feature>
<feature type="strand" evidence="8">
    <location>
        <begin position="157"/>
        <end position="161"/>
    </location>
</feature>
<feature type="strand" evidence="8">
    <location>
        <begin position="165"/>
        <end position="176"/>
    </location>
</feature>
<feature type="helix" evidence="8">
    <location>
        <begin position="179"/>
        <end position="189"/>
    </location>
</feature>
<accession>P54178</accession>
<proteinExistence type="evidence at protein level"/>
<protein>
    <recommendedName>
        <fullName>SCO1 protein homolog</fullName>
    </recommendedName>
    <alternativeName>
        <fullName>BsSco</fullName>
    </alternativeName>
</protein>
<gene>
    <name type="primary">ypmQ</name>
    <name type="ordered locus">BSU21750</name>
</gene>
<evidence type="ECO:0000250" key="1"/>
<evidence type="ECO:0000255" key="2">
    <source>
        <dbReference type="PROSITE-ProRule" id="PRU00691"/>
    </source>
</evidence>
<evidence type="ECO:0000269" key="3">
    <source>
    </source>
</evidence>
<evidence type="ECO:0000269" key="4">
    <source>
    </source>
</evidence>
<evidence type="ECO:0000269" key="5">
    <source>
    </source>
</evidence>
<evidence type="ECO:0000305" key="6"/>
<evidence type="ECO:0007829" key="7">
    <source>
        <dbReference type="PDB" id="1ON4"/>
    </source>
</evidence>
<evidence type="ECO:0007829" key="8">
    <source>
        <dbReference type="PDB" id="1XZO"/>
    </source>
</evidence>
<sequence length="193" mass="21718">MKVIKGLTAGLIFLFLCACGGQQIKDPLNYEVEPFTFQNQDGKNVSLESLKGEVWLADFIFTNCETICPPMTAHMTDLQKKLKAENIDVRIISFSVDPENDKPKQLKKFAANYPLSFDNWDFLTGYSQSEIEEFALKSFKAIVKKPEGEDQVIHQSSFYLVGPDGKVLKDYNGVENTPYDDIISDVKSASTLK</sequence>
<comment type="function">
    <text evidence="3 5">Necessary for insertion of copper into the active site of cytochrome c oxidase. May play a role in copper homeostasis or redox signaling.</text>
</comment>
<comment type="subunit">
    <text evidence="5">Monomer.</text>
</comment>
<comment type="subcellular location">
    <subcellularLocation>
        <location evidence="3 4">Cell membrane</location>
        <topology evidence="3 4">Lipid-anchor</topology>
        <orientation evidence="3 4">Cytoplasmic side</orientation>
    </subcellularLocation>
</comment>
<comment type="mass spectrometry" mass="21108.0" error="64.5" method="MALDI" evidence="4">
    <text>The measured mass is closest to that of the mature protein with 2 palmitate moieties.</text>
</comment>
<comment type="similarity">
    <text evidence="6">Belongs to the SCO1/2 family.</text>
</comment>
<organism>
    <name type="scientific">Bacillus subtilis (strain 168)</name>
    <dbReference type="NCBI Taxonomy" id="224308"/>
    <lineage>
        <taxon>Bacteria</taxon>
        <taxon>Bacillati</taxon>
        <taxon>Bacillota</taxon>
        <taxon>Bacilli</taxon>
        <taxon>Bacillales</taxon>
        <taxon>Bacillaceae</taxon>
        <taxon>Bacillus</taxon>
    </lineage>
</organism>
<dbReference type="EMBL" id="L77246">
    <property type="protein sequence ID" value="AAA96641.1"/>
    <property type="molecule type" value="Genomic_DNA"/>
</dbReference>
<dbReference type="EMBL" id="AL009126">
    <property type="protein sequence ID" value="CAB14093.2"/>
    <property type="molecule type" value="Genomic_DNA"/>
</dbReference>
<dbReference type="PIR" id="H69938">
    <property type="entry name" value="H69938"/>
</dbReference>
<dbReference type="PDB" id="1ON4">
    <property type="method" value="NMR"/>
    <property type="chains" value="A=24-193"/>
</dbReference>
<dbReference type="PDB" id="1XZO">
    <property type="method" value="X-ray"/>
    <property type="resolution" value="1.70 A"/>
    <property type="chains" value="A/B=22-193"/>
</dbReference>
<dbReference type="PDBsum" id="1ON4"/>
<dbReference type="PDBsum" id="1XZO"/>
<dbReference type="BMRB" id="P54178"/>
<dbReference type="SMR" id="P54178"/>
<dbReference type="FunCoup" id="P54178">
    <property type="interactions" value="131"/>
</dbReference>
<dbReference type="STRING" id="224308.BSU21750"/>
<dbReference type="PaxDb" id="224308-BSU21750"/>
<dbReference type="EnsemblBacteria" id="CAB14093">
    <property type="protein sequence ID" value="CAB14093"/>
    <property type="gene ID" value="BSU_21750"/>
</dbReference>
<dbReference type="GeneID" id="939098"/>
<dbReference type="KEGG" id="bsu:BSU21750"/>
<dbReference type="PATRIC" id="fig|224308.179.peg.2376"/>
<dbReference type="eggNOG" id="COG1999">
    <property type="taxonomic scope" value="Bacteria"/>
</dbReference>
<dbReference type="InParanoid" id="P54178"/>
<dbReference type="OrthoDB" id="9811998at2"/>
<dbReference type="PhylomeDB" id="P54178"/>
<dbReference type="BioCyc" id="BSUB:BSU21750-MONOMER"/>
<dbReference type="EvolutionaryTrace" id="P54178"/>
<dbReference type="Proteomes" id="UP000001570">
    <property type="component" value="Chromosome"/>
</dbReference>
<dbReference type="GO" id="GO:0005886">
    <property type="term" value="C:plasma membrane"/>
    <property type="evidence" value="ECO:0007669"/>
    <property type="project" value="UniProtKB-SubCell"/>
</dbReference>
<dbReference type="GO" id="GO:0046872">
    <property type="term" value="F:metal ion binding"/>
    <property type="evidence" value="ECO:0007669"/>
    <property type="project" value="UniProtKB-KW"/>
</dbReference>
<dbReference type="CDD" id="cd02968">
    <property type="entry name" value="SCO"/>
    <property type="match status" value="1"/>
</dbReference>
<dbReference type="Gene3D" id="3.40.30.10">
    <property type="entry name" value="Glutaredoxin"/>
    <property type="match status" value="1"/>
</dbReference>
<dbReference type="InterPro" id="IPR003782">
    <property type="entry name" value="SCO1/SenC"/>
</dbReference>
<dbReference type="InterPro" id="IPR036249">
    <property type="entry name" value="Thioredoxin-like_sf"/>
</dbReference>
<dbReference type="InterPro" id="IPR013766">
    <property type="entry name" value="Thioredoxin_domain"/>
</dbReference>
<dbReference type="PANTHER" id="PTHR12151">
    <property type="entry name" value="ELECTRON TRANSPORT PROTIN SCO1/SENC FAMILY MEMBER"/>
    <property type="match status" value="1"/>
</dbReference>
<dbReference type="PANTHER" id="PTHR12151:SF25">
    <property type="entry name" value="LINALOOL DEHYDRATASE_ISOMERASE DOMAIN-CONTAINING PROTEIN"/>
    <property type="match status" value="1"/>
</dbReference>
<dbReference type="Pfam" id="PF02630">
    <property type="entry name" value="SCO1-SenC"/>
    <property type="match status" value="1"/>
</dbReference>
<dbReference type="SUPFAM" id="SSF52833">
    <property type="entry name" value="Thioredoxin-like"/>
    <property type="match status" value="1"/>
</dbReference>
<dbReference type="PROSITE" id="PS51352">
    <property type="entry name" value="THIOREDOXIN_2"/>
    <property type="match status" value="1"/>
</dbReference>
<keyword id="KW-0002">3D-structure</keyword>
<keyword id="KW-1003">Cell membrane</keyword>
<keyword id="KW-0143">Chaperone</keyword>
<keyword id="KW-0186">Copper</keyword>
<keyword id="KW-0449">Lipoprotein</keyword>
<keyword id="KW-0472">Membrane</keyword>
<keyword id="KW-0479">Metal-binding</keyword>
<keyword id="KW-0564">Palmitate</keyword>
<keyword id="KW-1185">Reference proteome</keyword>
<keyword id="KW-0732">Signal</keyword>
<reference key="1">
    <citation type="journal article" date="1996" name="Microbiology">
        <title>Organization of the Bacillus subtilis 168 chromosome between kdg and the attachment site of the SP beta prophage: use of long accurate PCR and yeast artificial chromosomes for sequencing.</title>
        <authorList>
            <person name="Capuano V."/>
            <person name="Galleron N."/>
            <person name="Pujic P."/>
            <person name="Sorokin A."/>
            <person name="Ehrlich S.D."/>
        </authorList>
    </citation>
    <scope>NUCLEOTIDE SEQUENCE [GENOMIC DNA]</scope>
    <source>
        <strain>168 / Marburg / ATCC 6051 / DSM 10 / JCM 1465 / NBRC 13719 / NCIMB 3610 / NRRL NRS-744 / VKM B-501</strain>
    </source>
</reference>
<reference key="2">
    <citation type="journal article" date="1997" name="Nature">
        <title>The complete genome sequence of the Gram-positive bacterium Bacillus subtilis.</title>
        <authorList>
            <person name="Kunst F."/>
            <person name="Ogasawara N."/>
            <person name="Moszer I."/>
            <person name="Albertini A.M."/>
            <person name="Alloni G."/>
            <person name="Azevedo V."/>
            <person name="Bertero M.G."/>
            <person name="Bessieres P."/>
            <person name="Bolotin A."/>
            <person name="Borchert S."/>
            <person name="Borriss R."/>
            <person name="Boursier L."/>
            <person name="Brans A."/>
            <person name="Braun M."/>
            <person name="Brignell S.C."/>
            <person name="Bron S."/>
            <person name="Brouillet S."/>
            <person name="Bruschi C.V."/>
            <person name="Caldwell B."/>
            <person name="Capuano V."/>
            <person name="Carter N.M."/>
            <person name="Choi S.-K."/>
            <person name="Codani J.-J."/>
            <person name="Connerton I.F."/>
            <person name="Cummings N.J."/>
            <person name="Daniel R.A."/>
            <person name="Denizot F."/>
            <person name="Devine K.M."/>
            <person name="Duesterhoeft A."/>
            <person name="Ehrlich S.D."/>
            <person name="Emmerson P.T."/>
            <person name="Entian K.-D."/>
            <person name="Errington J."/>
            <person name="Fabret C."/>
            <person name="Ferrari E."/>
            <person name="Foulger D."/>
            <person name="Fritz C."/>
            <person name="Fujita M."/>
            <person name="Fujita Y."/>
            <person name="Fuma S."/>
            <person name="Galizzi A."/>
            <person name="Galleron N."/>
            <person name="Ghim S.-Y."/>
            <person name="Glaser P."/>
            <person name="Goffeau A."/>
            <person name="Golightly E.J."/>
            <person name="Grandi G."/>
            <person name="Guiseppi G."/>
            <person name="Guy B.J."/>
            <person name="Haga K."/>
            <person name="Haiech J."/>
            <person name="Harwood C.R."/>
            <person name="Henaut A."/>
            <person name="Hilbert H."/>
            <person name="Holsappel S."/>
            <person name="Hosono S."/>
            <person name="Hullo M.-F."/>
            <person name="Itaya M."/>
            <person name="Jones L.-M."/>
            <person name="Joris B."/>
            <person name="Karamata D."/>
            <person name="Kasahara Y."/>
            <person name="Klaerr-Blanchard M."/>
            <person name="Klein C."/>
            <person name="Kobayashi Y."/>
            <person name="Koetter P."/>
            <person name="Koningstein G."/>
            <person name="Krogh S."/>
            <person name="Kumano M."/>
            <person name="Kurita K."/>
            <person name="Lapidus A."/>
            <person name="Lardinois S."/>
            <person name="Lauber J."/>
            <person name="Lazarevic V."/>
            <person name="Lee S.-M."/>
            <person name="Levine A."/>
            <person name="Liu H."/>
            <person name="Masuda S."/>
            <person name="Mauel C."/>
            <person name="Medigue C."/>
            <person name="Medina N."/>
            <person name="Mellado R.P."/>
            <person name="Mizuno M."/>
            <person name="Moestl D."/>
            <person name="Nakai S."/>
            <person name="Noback M."/>
            <person name="Noone D."/>
            <person name="O'Reilly M."/>
            <person name="Ogawa K."/>
            <person name="Ogiwara A."/>
            <person name="Oudega B."/>
            <person name="Park S.-H."/>
            <person name="Parro V."/>
            <person name="Pohl T.M."/>
            <person name="Portetelle D."/>
            <person name="Porwollik S."/>
            <person name="Prescott A.M."/>
            <person name="Presecan E."/>
            <person name="Pujic P."/>
            <person name="Purnelle B."/>
            <person name="Rapoport G."/>
            <person name="Rey M."/>
            <person name="Reynolds S."/>
            <person name="Rieger M."/>
            <person name="Rivolta C."/>
            <person name="Rocha E."/>
            <person name="Roche B."/>
            <person name="Rose M."/>
            <person name="Sadaie Y."/>
            <person name="Sato T."/>
            <person name="Scanlan E."/>
            <person name="Schleich S."/>
            <person name="Schroeter R."/>
            <person name="Scoffone F."/>
            <person name="Sekiguchi J."/>
            <person name="Sekowska A."/>
            <person name="Seror S.J."/>
            <person name="Serror P."/>
            <person name="Shin B.-S."/>
            <person name="Soldo B."/>
            <person name="Sorokin A."/>
            <person name="Tacconi E."/>
            <person name="Takagi T."/>
            <person name="Takahashi H."/>
            <person name="Takemaru K."/>
            <person name="Takeuchi M."/>
            <person name="Tamakoshi A."/>
            <person name="Tanaka T."/>
            <person name="Terpstra P."/>
            <person name="Tognoni A."/>
            <person name="Tosato V."/>
            <person name="Uchiyama S."/>
            <person name="Vandenbol M."/>
            <person name="Vannier F."/>
            <person name="Vassarotti A."/>
            <person name="Viari A."/>
            <person name="Wambutt R."/>
            <person name="Wedler E."/>
            <person name="Wedler H."/>
            <person name="Weitzenegger T."/>
            <person name="Winters P."/>
            <person name="Wipat A."/>
            <person name="Yamamoto H."/>
            <person name="Yamane K."/>
            <person name="Yasumoto K."/>
            <person name="Yata K."/>
            <person name="Yoshida K."/>
            <person name="Yoshikawa H.-F."/>
            <person name="Zumstein E."/>
            <person name="Yoshikawa H."/>
            <person name="Danchin A."/>
        </authorList>
    </citation>
    <scope>NUCLEOTIDE SEQUENCE [LARGE SCALE GENOMIC DNA]</scope>
    <source>
        <strain>168</strain>
    </source>
</reference>
<reference key="3">
    <citation type="journal article" date="2009" name="Microbiology">
        <title>From a consortium sequence to a unified sequence: the Bacillus subtilis 168 reference genome a decade later.</title>
        <authorList>
            <person name="Barbe V."/>
            <person name="Cruveiller S."/>
            <person name="Kunst F."/>
            <person name="Lenoble P."/>
            <person name="Meurice G."/>
            <person name="Sekowska A."/>
            <person name="Vallenet D."/>
            <person name="Wang T."/>
            <person name="Moszer I."/>
            <person name="Medigue C."/>
            <person name="Danchin A."/>
        </authorList>
    </citation>
    <scope>SEQUENCE REVISION TO 85</scope>
</reference>
<reference key="4">
    <citation type="journal article" date="2000" name="J. Biol. Chem.">
        <title>Characterization of YpmQ, an accessory protein required for the expression of cytochrome c oxidase in Bacillus subtilis.</title>
        <authorList>
            <person name="Mattatall N.R."/>
            <person name="Jazairi J."/>
            <person name="Hill B.C."/>
        </authorList>
    </citation>
    <scope>FUNCTION</scope>
    <scope>MUTAGENESIS OF CYS-64; CYS-68 AND HIS-154</scope>
    <scope>SUBCELLULAR LOCATION</scope>
</reference>
<reference key="5">
    <citation type="journal article" date="2004" name="Protein Expr. Purif.">
        <title>Expression, purification, and characterization of BsSco, an accessory protein involved in the assembly of cytochrome c oxidase in Bacillus subtilis.</title>
        <authorList>
            <person name="Andrews D."/>
            <person name="Rattenbury J."/>
            <person name="Anand V."/>
            <person name="Mattatall N.R."/>
            <person name="Hill B.C."/>
        </authorList>
    </citation>
    <scope>SUBCELLULAR LOCATION</scope>
    <scope>MASS SPECTROMETRY</scope>
</reference>
<reference key="6">
    <citation type="journal article" date="2003" name="Structure">
        <title>Solution structure of Sco1: a thioredoxin-like protein involved in cytochrome c oxidase assembly.</title>
        <authorList>
            <person name="Balatri E."/>
            <person name="Banci L."/>
            <person name="Bertini I."/>
            <person name="Cantini F."/>
            <person name="Ciofi-Baffoni S."/>
        </authorList>
    </citation>
    <scope>STRUCTURE BY NMR OF 24-193</scope>
    <scope>COPPER BINDING</scope>
</reference>
<reference key="7">
    <citation type="journal article" date="2005" name="Biochemistry">
        <title>Identification of a disulfide switch in BsSco, a member of the Sco family of cytochrome c oxidase assembly proteins.</title>
        <authorList>
            <person name="Ye Q."/>
            <person name="Imriskova-Sosova I."/>
            <person name="Hill B.C."/>
            <person name="Jia Z."/>
        </authorList>
    </citation>
    <scope>X-RAY CRYSTALLOGRAPHY (1.7 ANGSTROMS) OF 20-193</scope>
    <scope>FUNCTION</scope>
    <scope>SUBUNIT</scope>
    <scope>IDENTIFICATION BY MASS SPECTROMETRY</scope>
</reference>